<geneLocation type="mitochondrion"/>
<keyword id="KW-0249">Electron transport</keyword>
<keyword id="KW-0472">Membrane</keyword>
<keyword id="KW-0496">Mitochondrion</keyword>
<keyword id="KW-0999">Mitochondrion inner membrane</keyword>
<keyword id="KW-0520">NAD</keyword>
<keyword id="KW-0679">Respiratory chain</keyword>
<keyword id="KW-1278">Translocase</keyword>
<keyword id="KW-0812">Transmembrane</keyword>
<keyword id="KW-1133">Transmembrane helix</keyword>
<keyword id="KW-0813">Transport</keyword>
<keyword id="KW-0830">Ubiquinone</keyword>
<proteinExistence type="inferred from homology"/>
<dbReference type="EC" id="7.1.1.2"/>
<dbReference type="EMBL" id="U10132">
    <property type="protein sequence ID" value="AAB51649.1"/>
    <property type="molecule type" value="Genomic_DNA"/>
</dbReference>
<dbReference type="EMBL" id="U10133">
    <property type="protein sequence ID" value="AAB51651.1"/>
    <property type="molecule type" value="Genomic_DNA"/>
</dbReference>
<dbReference type="SMR" id="Q31696"/>
<dbReference type="STRING" id="34691.Q31696"/>
<dbReference type="Proteomes" id="UP000076407">
    <property type="component" value="Unassembled WGS sequence"/>
</dbReference>
<dbReference type="GO" id="GO:0005743">
    <property type="term" value="C:mitochondrial inner membrane"/>
    <property type="evidence" value="ECO:0007669"/>
    <property type="project" value="UniProtKB-SubCell"/>
</dbReference>
<dbReference type="GO" id="GO:0008137">
    <property type="term" value="F:NADH dehydrogenase (ubiquinone) activity"/>
    <property type="evidence" value="ECO:0007669"/>
    <property type="project" value="UniProtKB-EC"/>
</dbReference>
<dbReference type="GO" id="GO:0042773">
    <property type="term" value="P:ATP synthesis coupled electron transport"/>
    <property type="evidence" value="ECO:0007669"/>
    <property type="project" value="InterPro"/>
</dbReference>
<dbReference type="GO" id="GO:0015990">
    <property type="term" value="P:electron transport coupled proton transport"/>
    <property type="evidence" value="ECO:0007669"/>
    <property type="project" value="TreeGrafter"/>
</dbReference>
<dbReference type="InterPro" id="IPR001750">
    <property type="entry name" value="ND/Mrp_TM"/>
</dbReference>
<dbReference type="InterPro" id="IPR003945">
    <property type="entry name" value="NU5C-like"/>
</dbReference>
<dbReference type="InterPro" id="IPR001516">
    <property type="entry name" value="Proton_antipo_N"/>
</dbReference>
<dbReference type="PANTHER" id="PTHR42829">
    <property type="entry name" value="NADH-UBIQUINONE OXIDOREDUCTASE CHAIN 5"/>
    <property type="match status" value="1"/>
</dbReference>
<dbReference type="PANTHER" id="PTHR42829:SF2">
    <property type="entry name" value="NADH-UBIQUINONE OXIDOREDUCTASE CHAIN 5"/>
    <property type="match status" value="1"/>
</dbReference>
<dbReference type="Pfam" id="PF00361">
    <property type="entry name" value="Proton_antipo_M"/>
    <property type="match status" value="1"/>
</dbReference>
<dbReference type="Pfam" id="PF00662">
    <property type="entry name" value="Proton_antipo_N"/>
    <property type="match status" value="1"/>
</dbReference>
<dbReference type="PRINTS" id="PR01434">
    <property type="entry name" value="NADHDHGNASE5"/>
</dbReference>
<reference key="1">
    <citation type="journal article" date="1994" name="Proc. Natl. Acad. Sci. U.S.A.">
        <title>Molecular phylogeny of the Anopheles gambiae complex suggests genetic introgression between principal malaria vectors.</title>
        <authorList>
            <person name="Besansky N.J."/>
            <person name="Powell J.R."/>
            <person name="Caccone A."/>
            <person name="Hamm D.M."/>
            <person name="Scott J.A."/>
            <person name="Collins F.H."/>
        </authorList>
    </citation>
    <scope>NUCLEOTIDE SEQUENCE [GENOMIC DNA]</scope>
    <source>
        <strain>Chil</strain>
        <strain>Squad</strain>
    </source>
</reference>
<name>NU5M_ANOQN</name>
<feature type="chain" id="PRO_0000118055" description="NADH-ubiquinone oxidoreductase chain 5">
    <location>
        <begin position="1"/>
        <end position="265" status="greater than"/>
    </location>
</feature>
<feature type="transmembrane region" description="Helical" evidence="2">
    <location>
        <begin position="10"/>
        <end position="30"/>
    </location>
</feature>
<feature type="transmembrane region" description="Helical" evidence="2">
    <location>
        <begin position="50"/>
        <end position="70"/>
    </location>
</feature>
<feature type="transmembrane region" description="Helical" evidence="2">
    <location>
        <begin position="92"/>
        <end position="112"/>
    </location>
</feature>
<feature type="transmembrane region" description="Helical" evidence="2">
    <location>
        <begin position="113"/>
        <end position="133"/>
    </location>
</feature>
<feature type="transmembrane region" description="Helical" evidence="2">
    <location>
        <begin position="153"/>
        <end position="173"/>
    </location>
</feature>
<feature type="transmembrane region" description="Helical" evidence="2">
    <location>
        <begin position="183"/>
        <end position="203"/>
    </location>
</feature>
<feature type="transmembrane region" description="Helical" evidence="2">
    <location>
        <begin position="215"/>
        <end position="235"/>
    </location>
</feature>
<feature type="transmembrane region" description="Helical" evidence="2">
    <location>
        <begin position="244"/>
        <end position="264"/>
    </location>
</feature>
<feature type="sequence variant" description="In strain: Chil.">
    <original>T</original>
    <variation>M</variation>
    <location>
        <position position="32"/>
    </location>
</feature>
<feature type="non-terminal residue">
    <location>
        <position position="265"/>
    </location>
</feature>
<organism>
    <name type="scientific">Anopheles quadriannulatus</name>
    <name type="common">Mosquito</name>
    <dbReference type="NCBI Taxonomy" id="34691"/>
    <lineage>
        <taxon>Eukaryota</taxon>
        <taxon>Metazoa</taxon>
        <taxon>Ecdysozoa</taxon>
        <taxon>Arthropoda</taxon>
        <taxon>Hexapoda</taxon>
        <taxon>Insecta</taxon>
        <taxon>Pterygota</taxon>
        <taxon>Neoptera</taxon>
        <taxon>Endopterygota</taxon>
        <taxon>Diptera</taxon>
        <taxon>Nematocera</taxon>
        <taxon>Culicoidea</taxon>
        <taxon>Culicidae</taxon>
        <taxon>Anophelinae</taxon>
        <taxon>Anopheles</taxon>
    </lineage>
</organism>
<evidence type="ECO:0000250" key="1"/>
<evidence type="ECO:0000255" key="2"/>
<evidence type="ECO:0000305" key="3"/>
<sequence>MNYLVNYCKISFYFLMSISLSLFLISLKFLLTDLVYFIEWEILSLQSMSIVMTFLFDWMSLMFMSFVLLISSLVIFYSNQYMEEDYNINRFILLVLMFVMSMMMLIISPNLISILLGWDGLGLVSYCLVIYFQNVKSYNAGMLTALSNRIGDVALLLAIAWMLNYGSWNYIFYLDMMKNNIEMMIIGGLVMLAAMTKSAQIPFSSWLPAAMAAPTPVSALVHSSTLVTAGVYLLIRFNDVLMNWWMAQFLLLVSGLTMFMAGLGA</sequence>
<protein>
    <recommendedName>
        <fullName>NADH-ubiquinone oxidoreductase chain 5</fullName>
        <ecNumber>7.1.1.2</ecNumber>
    </recommendedName>
    <alternativeName>
        <fullName>NADH dehydrogenase subunit 5</fullName>
    </alternativeName>
</protein>
<gene>
    <name type="primary">ND5</name>
</gene>
<accession>Q31696</accession>
<comment type="function">
    <text evidence="1">Core subunit of the mitochondrial membrane respiratory chain NADH dehydrogenase (Complex I) that is believed to belong to the minimal assembly required for catalysis. Complex I functions in the transfer of electrons from NADH to the respiratory chain. The immediate electron acceptor for the enzyme is believed to be ubiquinone (By similarity).</text>
</comment>
<comment type="catalytic activity">
    <reaction>
        <text>a ubiquinone + NADH + 5 H(+)(in) = a ubiquinol + NAD(+) + 4 H(+)(out)</text>
        <dbReference type="Rhea" id="RHEA:29091"/>
        <dbReference type="Rhea" id="RHEA-COMP:9565"/>
        <dbReference type="Rhea" id="RHEA-COMP:9566"/>
        <dbReference type="ChEBI" id="CHEBI:15378"/>
        <dbReference type="ChEBI" id="CHEBI:16389"/>
        <dbReference type="ChEBI" id="CHEBI:17976"/>
        <dbReference type="ChEBI" id="CHEBI:57540"/>
        <dbReference type="ChEBI" id="CHEBI:57945"/>
        <dbReference type="EC" id="7.1.1.2"/>
    </reaction>
</comment>
<comment type="subcellular location">
    <subcellularLocation>
        <location evidence="1">Mitochondrion inner membrane</location>
        <topology evidence="1">Multi-pass membrane protein</topology>
    </subcellularLocation>
</comment>
<comment type="similarity">
    <text evidence="3">Belongs to the complex I subunit 5 family.</text>
</comment>